<proteinExistence type="inferred from homology"/>
<organism>
    <name type="scientific">Methanosarcina acetivorans (strain ATCC 35395 / DSM 2834 / JCM 12185 / C2A)</name>
    <dbReference type="NCBI Taxonomy" id="188937"/>
    <lineage>
        <taxon>Archaea</taxon>
        <taxon>Methanobacteriati</taxon>
        <taxon>Methanobacteriota</taxon>
        <taxon>Stenosarchaea group</taxon>
        <taxon>Methanomicrobia</taxon>
        <taxon>Methanosarcinales</taxon>
        <taxon>Methanosarcinaceae</taxon>
        <taxon>Methanosarcina</taxon>
    </lineage>
</organism>
<dbReference type="EMBL" id="AE010299">
    <property type="protein sequence ID" value="AAM07215.1"/>
    <property type="molecule type" value="Genomic_DNA"/>
</dbReference>
<dbReference type="RefSeq" id="WP_011023762.1">
    <property type="nucleotide sequence ID" value="NC_003552.1"/>
</dbReference>
<dbReference type="SMR" id="Q8TJC2"/>
<dbReference type="FunCoup" id="Q8TJC2">
    <property type="interactions" value="71"/>
</dbReference>
<dbReference type="STRING" id="188937.MA_3864"/>
<dbReference type="EnsemblBacteria" id="AAM07215">
    <property type="protein sequence ID" value="AAM07215"/>
    <property type="gene ID" value="MA_3864"/>
</dbReference>
<dbReference type="GeneID" id="1475757"/>
<dbReference type="KEGG" id="mac:MA_3864"/>
<dbReference type="HOGENOM" id="CLU_040403_0_0_2"/>
<dbReference type="InParanoid" id="Q8TJC2"/>
<dbReference type="OrthoDB" id="67748at2157"/>
<dbReference type="PhylomeDB" id="Q8TJC2"/>
<dbReference type="UniPathway" id="UPA00642"/>
<dbReference type="Proteomes" id="UP000002487">
    <property type="component" value="Chromosome"/>
</dbReference>
<dbReference type="GO" id="GO:0019385">
    <property type="term" value="P:methanogenesis, from acetate"/>
    <property type="evidence" value="ECO:0007669"/>
    <property type="project" value="UniProtKB-UniRule"/>
</dbReference>
<dbReference type="GO" id="GO:0006730">
    <property type="term" value="P:one-carbon metabolic process"/>
    <property type="evidence" value="ECO:0007669"/>
    <property type="project" value="InterPro"/>
</dbReference>
<dbReference type="FunFam" id="3.20.20.20:FF:000009">
    <property type="entry name" value="Acetyl-CoA decarbonylase/synthase complex subunit delta"/>
    <property type="match status" value="1"/>
</dbReference>
<dbReference type="Gene3D" id="3.20.20.20">
    <property type="entry name" value="Dihydropteroate synthase-like"/>
    <property type="match status" value="1"/>
</dbReference>
<dbReference type="HAMAP" id="MF_01135">
    <property type="entry name" value="CdhD"/>
    <property type="match status" value="1"/>
</dbReference>
<dbReference type="InterPro" id="IPR016041">
    <property type="entry name" value="Ac-CoA_synth_d_su_TIM-brl"/>
</dbReference>
<dbReference type="InterPro" id="IPR051069">
    <property type="entry name" value="ACDS_complex_subunit"/>
</dbReference>
<dbReference type="InterPro" id="IPR004486">
    <property type="entry name" value="CO_DH/Ac-CoA_synth_dsu"/>
</dbReference>
<dbReference type="InterPro" id="IPR011005">
    <property type="entry name" value="Dihydropteroate_synth-like_sf"/>
</dbReference>
<dbReference type="NCBIfam" id="TIGR00381">
    <property type="entry name" value="cdhD"/>
    <property type="match status" value="1"/>
</dbReference>
<dbReference type="NCBIfam" id="NF003375">
    <property type="entry name" value="PRK04452.1-1"/>
    <property type="match status" value="1"/>
</dbReference>
<dbReference type="NCBIfam" id="NF003376">
    <property type="entry name" value="PRK04452.1-2"/>
    <property type="match status" value="1"/>
</dbReference>
<dbReference type="PANTHER" id="PTHR36214">
    <property type="match status" value="1"/>
</dbReference>
<dbReference type="PANTHER" id="PTHR36214:SF5">
    <property type="entry name" value="ACETYL-COA DECARBONYLASE_SYNTHASE COMPLEX SUBUNIT DELTA"/>
    <property type="match status" value="1"/>
</dbReference>
<dbReference type="Pfam" id="PF03599">
    <property type="entry name" value="CdhD"/>
    <property type="match status" value="1"/>
</dbReference>
<dbReference type="SUPFAM" id="SSF51717">
    <property type="entry name" value="Dihydropteroate synthetase-like"/>
    <property type="match status" value="1"/>
</dbReference>
<comment type="function">
    <text evidence="1">Part of a complex that catalyzes the reversible cleavage of acetyl-CoA, allowing growth on acetate as sole source of carbon and energy. Probably maintains the overall quaternary structure of the ACDS complex (By similarity).</text>
</comment>
<comment type="pathway">
    <text>One-carbon metabolism; methanogenesis from acetate.</text>
</comment>
<comment type="subunit">
    <text evidence="2">Heterodimer of delta and gamma chains. The ACDS complex is made up of alpha, epsilon, beta, gamma and delta chains with a probable stoichiometry of (alpha(2)epsilon(2))(4)-beta(8)-(gamma(1)delta(1))(8) (Potential).</text>
</comment>
<comment type="similarity">
    <text evidence="2">Belongs to the CdhD family.</text>
</comment>
<sequence>MAKKMKLSDITNMFAGMDVEALEGVTIEGDIEIDLGGLGGGFDPMLAAALGQESAILAQHFARLAGMFGYPVGIGAPAAPAVSPALAAPKLKDLIPAKFDVANIAEWATEIQEVPIGNTSADGGSRGKRVMLGGEKALPFYFDAPMPNRNQVTIDVFDMRIGLAKAVKENYDEVMDSPGEWAKKNVEKFNADMITIHLISTDPLIKDTPAKEAAKTVEEVLQAVDVPIAIGGSGNPQKDPEVLARAAEVSEGERCLLASASLNLDYAAIAEAALKYDHDVLSWTQLDMNAQKELNRKLMKQCNVPRDRIIMDPTTAALGYGLDYAYTNMERIRLAALMGDDELTFPMSSGTTNAWGARESWMVSSPLKEDSDWGPREYRGPIWEIVTGLSLAIAGNDLFMMMHPTSVAVLKQITQTLFGMIDTEQVDVANWIGAEV</sequence>
<feature type="chain" id="PRO_0000155111" description="Acetyl-CoA decarbonylase/synthase complex subunit delta 2">
    <location>
        <begin position="1"/>
        <end position="436"/>
    </location>
</feature>
<keyword id="KW-0484">Methanogenesis</keyword>
<keyword id="KW-1185">Reference proteome</keyword>
<gene>
    <name type="primary">cdhD2</name>
    <name type="ordered locus">MA_3864</name>
</gene>
<evidence type="ECO:0000250" key="1"/>
<evidence type="ECO:0000305" key="2"/>
<name>ACDD2_METAC</name>
<reference key="1">
    <citation type="journal article" date="2002" name="Genome Res.">
        <title>The genome of Methanosarcina acetivorans reveals extensive metabolic and physiological diversity.</title>
        <authorList>
            <person name="Galagan J.E."/>
            <person name="Nusbaum C."/>
            <person name="Roy A."/>
            <person name="Endrizzi M.G."/>
            <person name="Macdonald P."/>
            <person name="FitzHugh W."/>
            <person name="Calvo S."/>
            <person name="Engels R."/>
            <person name="Smirnov S."/>
            <person name="Atnoor D."/>
            <person name="Brown A."/>
            <person name="Allen N."/>
            <person name="Naylor J."/>
            <person name="Stange-Thomann N."/>
            <person name="DeArellano K."/>
            <person name="Johnson R."/>
            <person name="Linton L."/>
            <person name="McEwan P."/>
            <person name="McKernan K."/>
            <person name="Talamas J."/>
            <person name="Tirrell A."/>
            <person name="Ye W."/>
            <person name="Zimmer A."/>
            <person name="Barber R.D."/>
            <person name="Cann I."/>
            <person name="Graham D.E."/>
            <person name="Grahame D.A."/>
            <person name="Guss A.M."/>
            <person name="Hedderich R."/>
            <person name="Ingram-Smith C."/>
            <person name="Kuettner H.C."/>
            <person name="Krzycki J.A."/>
            <person name="Leigh J.A."/>
            <person name="Li W."/>
            <person name="Liu J."/>
            <person name="Mukhopadhyay B."/>
            <person name="Reeve J.N."/>
            <person name="Smith K."/>
            <person name="Springer T.A."/>
            <person name="Umayam L.A."/>
            <person name="White O."/>
            <person name="White R.H."/>
            <person name="de Macario E.C."/>
            <person name="Ferry J.G."/>
            <person name="Jarrell K.F."/>
            <person name="Jing H."/>
            <person name="Macario A.J.L."/>
            <person name="Paulsen I.T."/>
            <person name="Pritchett M."/>
            <person name="Sowers K.R."/>
            <person name="Swanson R.V."/>
            <person name="Zinder S.H."/>
            <person name="Lander E."/>
            <person name="Metcalf W.W."/>
            <person name="Birren B."/>
        </authorList>
    </citation>
    <scope>NUCLEOTIDE SEQUENCE [LARGE SCALE GENOMIC DNA]</scope>
    <source>
        <strain>ATCC 35395 / DSM 2834 / JCM 12185 / C2A</strain>
    </source>
</reference>
<protein>
    <recommendedName>
        <fullName>Acetyl-CoA decarbonylase/synthase complex subunit delta 2</fullName>
        <shortName>ACDS complex subunit delta 2</shortName>
    </recommendedName>
    <alternativeName>
        <fullName>Corrinoid/iron-sulfur component small subunit 2</fullName>
    </alternativeName>
</protein>
<accession>Q8TJC2</accession>